<keyword id="KW-0002">3D-structure</keyword>
<keyword id="KW-0007">Acetylation</keyword>
<keyword id="KW-0963">Cytoplasm</keyword>
<keyword id="KW-0597">Phosphoprotein</keyword>
<keyword id="KW-1185">Reference proteome</keyword>
<keyword id="KW-0687">Ribonucleoprotein</keyword>
<keyword id="KW-0689">Ribosomal protein</keyword>
<comment type="function">
    <text evidence="3 4 8">Component of the large ribosomal subunit (PubMed:26245381, PubMed:27863242, PubMed:30517857). The ribosome is a large ribonucleoprotein complex responsible for the synthesis of proteins in the cell (PubMed:26245381, PubMed:27863242, PubMed:30517857).</text>
</comment>
<comment type="subunit">
    <text evidence="3 4 5 6 7 8 9 10 11 12 13 14 15">Component of the large ribosomal subunit.</text>
</comment>
<comment type="subcellular location">
    <subcellularLocation>
        <location evidence="3 4 5 6 7 8 9 10 11 12 13 14 15">Cytoplasm</location>
    </subcellularLocation>
</comment>
<comment type="similarity">
    <text evidence="16">Belongs to the eukaryotic ribosomal protein eL31 family.</text>
</comment>
<reference key="1">
    <citation type="journal article" date="2011" name="Nature">
        <title>A high-resolution map of human evolutionary constraint using 29 mammals.</title>
        <authorList>
            <person name="Lindblad-Toh K."/>
            <person name="Garber M."/>
            <person name="Zuk O."/>
            <person name="Lin M.F."/>
            <person name="Parker B.J."/>
            <person name="Washietl S."/>
            <person name="Kheradpour P."/>
            <person name="Ernst J."/>
            <person name="Jordan G."/>
            <person name="Mauceli E."/>
            <person name="Ward L.D."/>
            <person name="Lowe C.B."/>
            <person name="Holloway A.K."/>
            <person name="Clamp M."/>
            <person name="Gnerre S."/>
            <person name="Alfoldi J."/>
            <person name="Beal K."/>
            <person name="Chang J."/>
            <person name="Clawson H."/>
            <person name="Cuff J."/>
            <person name="Di Palma F."/>
            <person name="Fitzgerald S."/>
            <person name="Flicek P."/>
            <person name="Guttman M."/>
            <person name="Hubisz M.J."/>
            <person name="Jaffe D.B."/>
            <person name="Jungreis I."/>
            <person name="Kent W.J."/>
            <person name="Kostka D."/>
            <person name="Lara M."/>
            <person name="Martins A.L."/>
            <person name="Massingham T."/>
            <person name="Moltke I."/>
            <person name="Raney B.J."/>
            <person name="Rasmussen M.D."/>
            <person name="Robinson J."/>
            <person name="Stark A."/>
            <person name="Vilella A.J."/>
            <person name="Wen J."/>
            <person name="Xie X."/>
            <person name="Zody M.C."/>
            <person name="Baldwin J."/>
            <person name="Bloom T."/>
            <person name="Chin C.W."/>
            <person name="Heiman D."/>
            <person name="Nicol R."/>
            <person name="Nusbaum C."/>
            <person name="Young S."/>
            <person name="Wilkinson J."/>
            <person name="Worley K.C."/>
            <person name="Kovar C.L."/>
            <person name="Muzny D.M."/>
            <person name="Gibbs R.A."/>
            <person name="Cree A."/>
            <person name="Dihn H.H."/>
            <person name="Fowler G."/>
            <person name="Jhangiani S."/>
            <person name="Joshi V."/>
            <person name="Lee S."/>
            <person name="Lewis L.R."/>
            <person name="Nazareth L.V."/>
            <person name="Okwuonu G."/>
            <person name="Santibanez J."/>
            <person name="Warren W.C."/>
            <person name="Mardis E.R."/>
            <person name="Weinstock G.M."/>
            <person name="Wilson R.K."/>
            <person name="Delehaunty K."/>
            <person name="Dooling D."/>
            <person name="Fronik C."/>
            <person name="Fulton L."/>
            <person name="Fulton B."/>
            <person name="Graves T."/>
            <person name="Minx P."/>
            <person name="Sodergren E."/>
            <person name="Birney E."/>
            <person name="Margulies E.H."/>
            <person name="Herrero J."/>
            <person name="Green E.D."/>
            <person name="Haussler D."/>
            <person name="Siepel A."/>
            <person name="Goldman N."/>
            <person name="Pollard K.S."/>
            <person name="Pedersen J.S."/>
            <person name="Lander E.S."/>
            <person name="Kellis M."/>
        </authorList>
    </citation>
    <scope>NUCLEOTIDE SEQUENCE [LARGE SCALE GENOMIC DNA]</scope>
    <source>
        <strain>Thorbecke</strain>
    </source>
</reference>
<reference evidence="17 18" key="2">
    <citation type="journal article" date="2015" name="Nature">
        <title>Structural basis for stop codon recognition in eukaryotes.</title>
        <authorList>
            <person name="Brown A."/>
            <person name="Shao S."/>
            <person name="Murray J."/>
            <person name="Hegde R.S."/>
            <person name="Ramakrishnan V."/>
        </authorList>
    </citation>
    <scope>STRUCTURE BY ELECTRON MICROSCOPY (3.45 ANGSTROMS) OF 18-124 OF RIBOSOME</scope>
    <scope>FUNCTION</scope>
    <scope>SUBCELLULAR LOCATION</scope>
    <scope>SUBUNIT</scope>
</reference>
<reference evidence="19 20" key="3">
    <citation type="journal article" date="2016" name="Cell">
        <title>Decoding mammalian ribosome-mRNA states by translational GTPase complexes.</title>
        <authorList>
            <person name="Shao S."/>
            <person name="Murray J."/>
            <person name="Brown A."/>
            <person name="Taunton J."/>
            <person name="Ramakrishnan V."/>
            <person name="Hegde R.S."/>
        </authorList>
    </citation>
    <scope>STRUCTURE BY ELECTRON MICROSCOPY (3.31 ANGSTROMS) OF RIBOSOME</scope>
    <scope>FUNCTION</scope>
    <scope>SUBCELLULAR LOCATION</scope>
    <scope>SUBUNIT</scope>
</reference>
<reference evidence="23" key="4">
    <citation type="journal article" date="2018" name="Cell Rep.">
        <title>tRNA translocation by the eukaryotic 80S ribosome and the impact of GTP hydrolysis.</title>
        <authorList>
            <person name="Flis J."/>
            <person name="Holm M."/>
            <person name="Rundlet E.J."/>
            <person name="Loerke J."/>
            <person name="Hilal T."/>
            <person name="Dabrowski M."/>
            <person name="Burger J."/>
            <person name="Mielke T."/>
            <person name="Blanchard S.C."/>
            <person name="Spahn C.M.T."/>
            <person name="Budkevich T.V."/>
        </authorList>
    </citation>
    <scope>STRUCTURE BY ELECTRON MICROSCOPY (3.60 ANGSTROMS) OF 18-123 OF RIBOSOME</scope>
    <scope>FUNCTION</scope>
    <scope>SUBCELLULAR LOCATION</scope>
    <scope>SUBUNIT</scope>
</reference>
<reference evidence="21 22" key="5">
    <citation type="journal article" date="2018" name="Elife">
        <title>Dual tRNA mimicry in the Cricket paralysis virus IRES uncovers an unexpected similarity with the Hepatitis C Virus IRES.</title>
        <authorList>
            <person name="Pisareva V.P."/>
            <person name="Pisarev A.V."/>
            <person name="Fernandez I.S."/>
        </authorList>
    </citation>
    <scope>STRUCTURE BY ELECTRON MICROSCOPY (3.20 ANGSTROMS) OF RIBOSOME</scope>
    <scope>SUBCELLULAR LOCATION</scope>
    <scope>SUBUNIT</scope>
</reference>
<reference evidence="26 27" key="6">
    <citation type="journal article" date="2018" name="Elife">
        <title>Structures of translationally inactive mammalian ribosomes.</title>
        <authorList>
            <person name="Brown A."/>
            <person name="Baird M.R."/>
            <person name="Yip M.C."/>
            <person name="Murray J."/>
            <person name="Shao S."/>
        </authorList>
    </citation>
    <scope>STRUCTURE BY ELECTRON MICROSCOPY (3.30 ANGSTROMS) OF 21-233 OF RIBOSOME</scope>
    <scope>SUBCELLULAR LOCATION</scope>
    <scope>SUBUNIT</scope>
</reference>
<reference evidence="24 25" key="7">
    <citation type="journal article" date="2018" name="Mol. Cell">
        <title>ZNF598 is a quality control sensor of collided ribosomes.</title>
        <authorList>
            <person name="Juszkiewicz S."/>
            <person name="Chandrasekaran V."/>
            <person name="Lin Z."/>
            <person name="Kraatz S."/>
            <person name="Ramakrishnan V."/>
            <person name="Hegde R.S."/>
        </authorList>
    </citation>
    <scope>STRUCTURE BY ELECTRON MICROSCOPY (3.80 ANGSTROMS) OF RIBOSOME</scope>
    <scope>SUBCELLULAR LOCATION</scope>
    <scope>SUBUNIT</scope>
</reference>
<reference evidence="30 31" key="8">
    <citation type="journal article" date="2019" name="Elife">
        <title>Structural and mutational analysis of the ribosome-arresting human XBP1u.</title>
        <authorList>
            <person name="Shanmuganathan V."/>
            <person name="Schiller N."/>
            <person name="Magoulopoulou A."/>
            <person name="Cheng J."/>
            <person name="Braunger K."/>
            <person name="Cymer F."/>
            <person name="Berninghausen O."/>
            <person name="Beatrix B."/>
            <person name="Kohno K."/>
            <person name="von Heijne G."/>
            <person name="Beckmann R."/>
        </authorList>
    </citation>
    <scope>STRUCTURE BY ELECTRON MICROSCOPY (3.00 ANGSTROMS) OF 18-124 OF RIBOSOME</scope>
    <scope>SUBCELLULAR LOCATION</scope>
    <scope>SUBUNIT</scope>
</reference>
<reference evidence="28 29" key="9">
    <citation type="journal article" date="2019" name="EMBO J.">
        <title>The Israeli acute paralysis virus IRES captures host ribosomes by mimicking a ribosomal state with hybrid tRNAs.</title>
        <authorList>
            <person name="Acosta-Reyes F."/>
            <person name="Neupane R."/>
            <person name="Frank J."/>
            <person name="Fernandez I.S."/>
        </authorList>
    </citation>
    <scope>STRUCTURE BY ELECTRON MICROSCOPY (3.10 ANGSTROMS) OF RIBOSOME</scope>
    <scope>SUBCELLULAR LOCATION</scope>
    <scope>SUBUNIT</scope>
</reference>
<reference evidence="32" key="10">
    <citation type="journal article" date="2019" name="Nat. Struct. Mol. Biol.">
        <title>Mechanism of ribosome stalling during translation of a poly(A) tail.</title>
        <authorList>
            <person name="Chandrasekaran V."/>
            <person name="Juszkiewicz S."/>
            <person name="Choi J."/>
            <person name="Puglisi J.D."/>
            <person name="Brown A."/>
            <person name="Shao S."/>
            <person name="Ramakrishnan V."/>
            <person name="Hegde R.S."/>
        </authorList>
    </citation>
    <scope>STRUCTURE BY ELECTRON MICROSCOPY (2.80 ANGSTROMS) OF RIBOSOME</scope>
    <scope>SUBCELLULAR LOCATION</scope>
    <scope>SUBUNIT</scope>
</reference>
<reference evidence="33 34" key="11">
    <citation type="journal article" date="2020" name="Cell Rep.">
        <title>The Halastavi arva virus intergenic region IRES promotes translation by the simplest possible initiation mechanism.</title>
        <authorList>
            <person name="Abaeva I.S."/>
            <person name="Vicens Q."/>
            <person name="Bochler A."/>
            <person name="Soufari H."/>
            <person name="Simonetti A."/>
            <person name="Pestova T.V."/>
            <person name="Hashem Y."/>
            <person name="Hellen C.U.T."/>
        </authorList>
    </citation>
    <scope>STRUCTURE BY ELECTRON MICROSCOPY (3.49 ANGSTROMS) OF 18-124 OF RIBOSOME</scope>
    <scope>SUBCELLULAR LOCATION</scope>
    <scope>SUBUNIT</scope>
</reference>
<reference evidence="36 37" key="12">
    <citation type="journal article" date="2022" name="Mol. Cell">
        <title>Direct epitranscriptomic regulation of mammalian translation initiation through N4-acetylcytidine.</title>
        <authorList>
            <person name="Arango D."/>
            <person name="Sturgill D."/>
            <person name="Yang R."/>
            <person name="Kanai T."/>
            <person name="Bauer P."/>
            <person name="Roy J."/>
            <person name="Wang Z."/>
            <person name="Hosogane M."/>
            <person name="Schiffers S."/>
            <person name="Oberdoerffer S."/>
        </authorList>
    </citation>
    <scope>STRUCTURE BY ELECTRON MICROSCOPY (2.80 ANGSTROMS) OF 2-123 OF RIBOSOME</scope>
    <scope>SUBCELLULAR LOCATION</scope>
    <scope>SUBUNIT</scope>
</reference>
<reference evidence="38 39" key="13">
    <citation type="journal article" date="2022" name="Science">
        <title>Structure of the mammalian ribosome as it decodes the selenocysteine UGA codon.</title>
        <authorList>
            <person name="Hilal T."/>
            <person name="Killam B.Y."/>
            <person name="Grozdanovic M."/>
            <person name="Dobosz-Bartoszek M."/>
            <person name="Loerke J."/>
            <person name="Buerger J."/>
            <person name="Mielke T."/>
            <person name="Copeland P.R."/>
            <person name="Simonovic M."/>
            <person name="Spahn C.M.T."/>
        </authorList>
    </citation>
    <scope>STRUCTURE BY ELECTRON MICROSCOPY (2.80 ANGSTROMS) OF RIBOSOME</scope>
    <scope>SUBCELLULAR LOCATION</scope>
    <scope>SUBUNIT</scope>
</reference>
<reference evidence="35" key="14">
    <citation type="journal article" date="2023" name="Nature">
        <title>A molecular network of conserved factors keeps ribosomes dormant in the egg.</title>
        <authorList>
            <person name="Leesch F."/>
            <person name="Lorenzo-Orts L."/>
            <person name="Pribitzer C."/>
            <person name="Grishkovskaya I."/>
            <person name="Roehsner J."/>
            <person name="Chugunova A."/>
            <person name="Matzinger M."/>
            <person name="Roitinger E."/>
            <person name="Belacic K."/>
            <person name="Kandolf S."/>
            <person name="Lin T.Y."/>
            <person name="Mechtler K."/>
            <person name="Meinhart A."/>
            <person name="Haselbach D."/>
            <person name="Pauli A."/>
        </authorList>
    </citation>
    <scope>STRUCTURE BY ELECTRON MICROSCOPY (2.30 ANGSTROMS) OF RIBOSOME</scope>
    <scope>SUBCELLULAR LOCATION</scope>
    <scope>SUBUNIT</scope>
</reference>
<evidence type="ECO:0000250" key="1">
    <source>
        <dbReference type="UniProtKB" id="P62899"/>
    </source>
</evidence>
<evidence type="ECO:0000250" key="2">
    <source>
        <dbReference type="UniProtKB" id="P62900"/>
    </source>
</evidence>
<evidence type="ECO:0000269" key="3">
    <source>
    </source>
</evidence>
<evidence type="ECO:0000269" key="4">
    <source>
    </source>
</evidence>
<evidence type="ECO:0000269" key="5">
    <source>
    </source>
</evidence>
<evidence type="ECO:0000269" key="6">
    <source>
    </source>
</evidence>
<evidence type="ECO:0000269" key="7">
    <source>
    </source>
</evidence>
<evidence type="ECO:0000269" key="8">
    <source>
    </source>
</evidence>
<evidence type="ECO:0000269" key="9">
    <source>
    </source>
</evidence>
<evidence type="ECO:0000269" key="10">
    <source>
    </source>
</evidence>
<evidence type="ECO:0000269" key="11">
    <source>
    </source>
</evidence>
<evidence type="ECO:0000269" key="12">
    <source>
    </source>
</evidence>
<evidence type="ECO:0000269" key="13">
    <source>
    </source>
</evidence>
<evidence type="ECO:0000269" key="14">
    <source>
    </source>
</evidence>
<evidence type="ECO:0000269" key="15">
    <source>
    </source>
</evidence>
<evidence type="ECO:0000305" key="16"/>
<evidence type="ECO:0007744" key="17">
    <source>
        <dbReference type="PDB" id="3JAG"/>
    </source>
</evidence>
<evidence type="ECO:0007744" key="18">
    <source>
        <dbReference type="PDB" id="3JAH"/>
    </source>
</evidence>
<evidence type="ECO:0007744" key="19">
    <source>
        <dbReference type="PDB" id="5LZS"/>
    </source>
</evidence>
<evidence type="ECO:0007744" key="20">
    <source>
        <dbReference type="PDB" id="5LZT"/>
    </source>
</evidence>
<evidence type="ECO:0007744" key="21">
    <source>
        <dbReference type="PDB" id="6D90"/>
    </source>
</evidence>
<evidence type="ECO:0007744" key="22">
    <source>
        <dbReference type="PDB" id="6D9J"/>
    </source>
</evidence>
<evidence type="ECO:0007744" key="23">
    <source>
        <dbReference type="PDB" id="6GZ3"/>
    </source>
</evidence>
<evidence type="ECO:0007744" key="24">
    <source>
        <dbReference type="PDB" id="6HCF"/>
    </source>
</evidence>
<evidence type="ECO:0007744" key="25">
    <source>
        <dbReference type="PDB" id="6HCJ"/>
    </source>
</evidence>
<evidence type="ECO:0007744" key="26">
    <source>
        <dbReference type="PDB" id="6MTB"/>
    </source>
</evidence>
<evidence type="ECO:0007744" key="27">
    <source>
        <dbReference type="PDB" id="6MTC"/>
    </source>
</evidence>
<evidence type="ECO:0007744" key="28">
    <source>
        <dbReference type="PDB" id="6P5I"/>
    </source>
</evidence>
<evidence type="ECO:0007744" key="29">
    <source>
        <dbReference type="PDB" id="6P5J"/>
    </source>
</evidence>
<evidence type="ECO:0007744" key="30">
    <source>
        <dbReference type="PDB" id="6R5Q"/>
    </source>
</evidence>
<evidence type="ECO:0007744" key="31">
    <source>
        <dbReference type="PDB" id="6R6G"/>
    </source>
</evidence>
<evidence type="ECO:0007744" key="32">
    <source>
        <dbReference type="PDB" id="6SGC"/>
    </source>
</evidence>
<evidence type="ECO:0007744" key="33">
    <source>
        <dbReference type="PDB" id="6ZVK"/>
    </source>
</evidence>
<evidence type="ECO:0007744" key="34">
    <source>
        <dbReference type="PDB" id="7A01"/>
    </source>
</evidence>
<evidence type="ECO:0007744" key="35">
    <source>
        <dbReference type="PDB" id="7OYD"/>
    </source>
</evidence>
<evidence type="ECO:0007744" key="36">
    <source>
        <dbReference type="PDB" id="7UCJ"/>
    </source>
</evidence>
<evidence type="ECO:0007744" key="37">
    <source>
        <dbReference type="PDB" id="7UCK"/>
    </source>
</evidence>
<evidence type="ECO:0007744" key="38">
    <source>
        <dbReference type="PDB" id="7ZJW"/>
    </source>
</evidence>
<evidence type="ECO:0007744" key="39">
    <source>
        <dbReference type="PDB" id="7ZJX"/>
    </source>
</evidence>
<feature type="chain" id="PRO_0000460121" description="Large ribosomal subunit protein eL31">
    <location>
        <begin position="1"/>
        <end position="125"/>
    </location>
</feature>
<feature type="modified residue" description="N-acetylmethionine" evidence="1">
    <location>
        <position position="1"/>
    </location>
</feature>
<feature type="modified residue" description="Phosphoserine" evidence="2">
    <location>
        <position position="15"/>
    </location>
</feature>
<feature type="modified residue" description="N6-succinyllysine" evidence="2">
    <location>
        <position position="55"/>
    </location>
</feature>
<feature type="modified residue" description="N6-succinyllysine" evidence="2">
    <location>
        <position position="70"/>
    </location>
</feature>
<feature type="modified residue" description="N6-acetyllysine; alternate" evidence="1">
    <location>
        <position position="75"/>
    </location>
</feature>
<feature type="modified residue" description="N6-succinyllysine; alternate" evidence="2">
    <location>
        <position position="75"/>
    </location>
</feature>
<feature type="modified residue" description="Phosphoserine" evidence="1">
    <location>
        <position position="98"/>
    </location>
</feature>
<name>RL31_RABIT</name>
<sequence>MAPAKKGGEKKKGRSAINEVVTREYTINIHKRIHGVGFKKRAPRALKEIRKFAMKEMGTPDVRIDTRLNKAVWAKGIRNVPYRIRVRLSRKRNEDEDSPNKLYTLVTYVPVTTFKNLQTVNVDEN</sequence>
<protein>
    <recommendedName>
        <fullName>Large ribosomal subunit protein eL31</fullName>
    </recommendedName>
    <alternativeName>
        <fullName>60S ribosomal protein L31</fullName>
    </alternativeName>
</protein>
<organism>
    <name type="scientific">Oryctolagus cuniculus</name>
    <name type="common">Rabbit</name>
    <dbReference type="NCBI Taxonomy" id="9986"/>
    <lineage>
        <taxon>Eukaryota</taxon>
        <taxon>Metazoa</taxon>
        <taxon>Chordata</taxon>
        <taxon>Craniata</taxon>
        <taxon>Vertebrata</taxon>
        <taxon>Euteleostomi</taxon>
        <taxon>Mammalia</taxon>
        <taxon>Eutheria</taxon>
        <taxon>Euarchontoglires</taxon>
        <taxon>Glires</taxon>
        <taxon>Lagomorpha</taxon>
        <taxon>Leporidae</taxon>
        <taxon>Oryctolagus</taxon>
    </lineage>
</organism>
<accession>G1SHG0</accession>
<proteinExistence type="evidence at protein level"/>
<dbReference type="EMBL" id="AAGW02007522">
    <property type="status" value="NOT_ANNOTATED_CDS"/>
    <property type="molecule type" value="Genomic_DNA"/>
</dbReference>
<dbReference type="RefSeq" id="XP_002709965.1">
    <property type="nucleotide sequence ID" value="XM_002709919.5"/>
</dbReference>
<dbReference type="PDB" id="3JAG">
    <property type="method" value="EM"/>
    <property type="resolution" value="3.65 A"/>
    <property type="chains" value="d=18-124"/>
</dbReference>
<dbReference type="PDB" id="3JAH">
    <property type="method" value="EM"/>
    <property type="resolution" value="3.45 A"/>
    <property type="chains" value="d=18-124"/>
</dbReference>
<dbReference type="PDB" id="3JAI">
    <property type="method" value="EM"/>
    <property type="resolution" value="3.65 A"/>
    <property type="chains" value="d=18-124"/>
</dbReference>
<dbReference type="PDB" id="5LZS">
    <property type="method" value="EM"/>
    <property type="resolution" value="3.31 A"/>
    <property type="chains" value="d=1-125"/>
</dbReference>
<dbReference type="PDB" id="5LZT">
    <property type="method" value="EM"/>
    <property type="resolution" value="3.65 A"/>
    <property type="chains" value="d=1-125"/>
</dbReference>
<dbReference type="PDB" id="5LZU">
    <property type="method" value="EM"/>
    <property type="resolution" value="3.75 A"/>
    <property type="chains" value="d=1-125"/>
</dbReference>
<dbReference type="PDB" id="5LZV">
    <property type="method" value="EM"/>
    <property type="resolution" value="3.35 A"/>
    <property type="chains" value="d=1-125"/>
</dbReference>
<dbReference type="PDB" id="5LZW">
    <property type="method" value="EM"/>
    <property type="resolution" value="3.53 A"/>
    <property type="chains" value="d=1-125"/>
</dbReference>
<dbReference type="PDB" id="5LZX">
    <property type="method" value="EM"/>
    <property type="resolution" value="3.67 A"/>
    <property type="chains" value="d=1-125"/>
</dbReference>
<dbReference type="PDB" id="5LZY">
    <property type="method" value="EM"/>
    <property type="resolution" value="3.99 A"/>
    <property type="chains" value="d=1-125"/>
</dbReference>
<dbReference type="PDB" id="5LZZ">
    <property type="method" value="EM"/>
    <property type="resolution" value="3.47 A"/>
    <property type="chains" value="d=1-125"/>
</dbReference>
<dbReference type="PDB" id="6D90">
    <property type="method" value="EM"/>
    <property type="resolution" value="3.20 A"/>
    <property type="chains" value="d=1-125"/>
</dbReference>
<dbReference type="PDB" id="6D9J">
    <property type="method" value="EM"/>
    <property type="resolution" value="3.20 A"/>
    <property type="chains" value="d=1-125"/>
</dbReference>
<dbReference type="PDB" id="6FTG">
    <property type="method" value="EM"/>
    <property type="resolution" value="9.10 A"/>
    <property type="chains" value="d=18-124"/>
</dbReference>
<dbReference type="PDB" id="6FTI">
    <property type="method" value="EM"/>
    <property type="resolution" value="4.20 A"/>
    <property type="chains" value="d=18-124"/>
</dbReference>
<dbReference type="PDB" id="6FTJ">
    <property type="method" value="EM"/>
    <property type="resolution" value="4.70 A"/>
    <property type="chains" value="d=18-124"/>
</dbReference>
<dbReference type="PDB" id="6GZ3">
    <property type="method" value="EM"/>
    <property type="resolution" value="3.60 A"/>
    <property type="chains" value="Ad=18-123"/>
</dbReference>
<dbReference type="PDB" id="6HCF">
    <property type="method" value="EM"/>
    <property type="resolution" value="3.90 A"/>
    <property type="chains" value="d3=1-125"/>
</dbReference>
<dbReference type="PDB" id="6HCJ">
    <property type="method" value="EM"/>
    <property type="resolution" value="3.80 A"/>
    <property type="chains" value="d3=1-125"/>
</dbReference>
<dbReference type="PDB" id="6HCM">
    <property type="method" value="EM"/>
    <property type="resolution" value="6.80 A"/>
    <property type="chains" value="d3=1-125"/>
</dbReference>
<dbReference type="PDB" id="6HCQ">
    <property type="method" value="EM"/>
    <property type="resolution" value="6.50 A"/>
    <property type="chains" value="d3=1-125"/>
</dbReference>
<dbReference type="PDB" id="6MTB">
    <property type="method" value="EM"/>
    <property type="resolution" value="3.60 A"/>
    <property type="chains" value="d=18-124"/>
</dbReference>
<dbReference type="PDB" id="6MTC">
    <property type="method" value="EM"/>
    <property type="resolution" value="3.40 A"/>
    <property type="chains" value="d=18-124"/>
</dbReference>
<dbReference type="PDB" id="6MTD">
    <property type="method" value="EM"/>
    <property type="resolution" value="3.30 A"/>
    <property type="chains" value="d=18-124"/>
</dbReference>
<dbReference type="PDB" id="6MTE">
    <property type="method" value="EM"/>
    <property type="resolution" value="3.40 A"/>
    <property type="chains" value="d=18-124"/>
</dbReference>
<dbReference type="PDB" id="6P5I">
    <property type="method" value="EM"/>
    <property type="resolution" value="3.10 A"/>
    <property type="chains" value="Ad=1-125"/>
</dbReference>
<dbReference type="PDB" id="6P5J">
    <property type="method" value="EM"/>
    <property type="resolution" value="3.10 A"/>
    <property type="chains" value="Ad=1-125"/>
</dbReference>
<dbReference type="PDB" id="6P5K">
    <property type="method" value="EM"/>
    <property type="resolution" value="3.10 A"/>
    <property type="chains" value="Ad=1-125"/>
</dbReference>
<dbReference type="PDB" id="6P5N">
    <property type="method" value="EM"/>
    <property type="resolution" value="3.20 A"/>
    <property type="chains" value="Ad=1-125"/>
</dbReference>
<dbReference type="PDB" id="6R5Q">
    <property type="method" value="EM"/>
    <property type="resolution" value="3.00 A"/>
    <property type="chains" value="d=18-124"/>
</dbReference>
<dbReference type="PDB" id="6R6G">
    <property type="method" value="EM"/>
    <property type="resolution" value="3.70 A"/>
    <property type="chains" value="d=18-124"/>
</dbReference>
<dbReference type="PDB" id="6R6P">
    <property type="method" value="EM"/>
    <property type="resolution" value="3.10 A"/>
    <property type="chains" value="d=18-124"/>
</dbReference>
<dbReference type="PDB" id="6R7Q">
    <property type="method" value="EM"/>
    <property type="resolution" value="3.90 A"/>
    <property type="chains" value="d=18-124"/>
</dbReference>
<dbReference type="PDB" id="6SGC">
    <property type="method" value="EM"/>
    <property type="resolution" value="2.80 A"/>
    <property type="chains" value="d2=1-125"/>
</dbReference>
<dbReference type="PDB" id="6T59">
    <property type="method" value="EM"/>
    <property type="resolution" value="3.11 A"/>
    <property type="chains" value="d3=1-125"/>
</dbReference>
<dbReference type="PDB" id="6ZVK">
    <property type="method" value="EM"/>
    <property type="resolution" value="3.49 A"/>
    <property type="chains" value="u2=18-124"/>
</dbReference>
<dbReference type="PDB" id="7A01">
    <property type="method" value="EM"/>
    <property type="resolution" value="3.60 A"/>
    <property type="chains" value="u2=18-124"/>
</dbReference>
<dbReference type="PDB" id="7MDZ">
    <property type="method" value="EM"/>
    <property type="resolution" value="3.20 A"/>
    <property type="chains" value="d=1-125"/>
</dbReference>
<dbReference type="PDB" id="7NFX">
    <property type="method" value="EM"/>
    <property type="resolution" value="3.20 A"/>
    <property type="chains" value="d=1-125"/>
</dbReference>
<dbReference type="PDB" id="7NWG">
    <property type="method" value="EM"/>
    <property type="resolution" value="3.80 A"/>
    <property type="chains" value="d3=18-124"/>
</dbReference>
<dbReference type="PDB" id="7NWI">
    <property type="method" value="EM"/>
    <property type="resolution" value="3.13 A"/>
    <property type="chains" value="d=18-124"/>
</dbReference>
<dbReference type="PDB" id="7O7Y">
    <property type="method" value="EM"/>
    <property type="resolution" value="2.20 A"/>
    <property type="chains" value="Bd=1-125"/>
</dbReference>
<dbReference type="PDB" id="7O7Z">
    <property type="method" value="EM"/>
    <property type="resolution" value="2.40 A"/>
    <property type="chains" value="Bd=1-125"/>
</dbReference>
<dbReference type="PDB" id="7O80">
    <property type="method" value="EM"/>
    <property type="resolution" value="2.90 A"/>
    <property type="chains" value="Bd=1-125"/>
</dbReference>
<dbReference type="PDB" id="7O81">
    <property type="method" value="EM"/>
    <property type="resolution" value="3.10 A"/>
    <property type="chains" value="Bd=1-125"/>
</dbReference>
<dbReference type="PDB" id="7OBR">
    <property type="method" value="EM"/>
    <property type="resolution" value="2.80 A"/>
    <property type="chains" value="d=1-125"/>
</dbReference>
<dbReference type="PDB" id="7OYD">
    <property type="method" value="EM"/>
    <property type="resolution" value="2.30 A"/>
    <property type="chains" value="d=1-125"/>
</dbReference>
<dbReference type="PDB" id="7QWQ">
    <property type="method" value="EM"/>
    <property type="resolution" value="2.83 A"/>
    <property type="chains" value="d=1-125"/>
</dbReference>
<dbReference type="PDB" id="7QWR">
    <property type="method" value="EM"/>
    <property type="resolution" value="2.90 A"/>
    <property type="chains" value="d=1-125"/>
</dbReference>
<dbReference type="PDB" id="7QWS">
    <property type="method" value="EM"/>
    <property type="resolution" value="3.40 A"/>
    <property type="chains" value="d=1-125"/>
</dbReference>
<dbReference type="PDB" id="7TM3">
    <property type="method" value="EM"/>
    <property type="resolution" value="3.25 A"/>
    <property type="chains" value="d=1-125"/>
</dbReference>
<dbReference type="PDB" id="7TOQ">
    <property type="method" value="EM"/>
    <property type="resolution" value="3.10 A"/>
    <property type="chains" value="AL31=18-124"/>
</dbReference>
<dbReference type="PDB" id="7TOR">
    <property type="method" value="EM"/>
    <property type="resolution" value="2.90 A"/>
    <property type="chains" value="AL31=18-124"/>
</dbReference>
<dbReference type="PDB" id="7TUT">
    <property type="method" value="EM"/>
    <property type="resolution" value="3.88 A"/>
    <property type="chains" value="d=1-125"/>
</dbReference>
<dbReference type="PDB" id="7UCJ">
    <property type="method" value="EM"/>
    <property type="resolution" value="3.10 A"/>
    <property type="chains" value="d=18-124"/>
</dbReference>
<dbReference type="PDB" id="7UCK">
    <property type="method" value="EM"/>
    <property type="resolution" value="2.80 A"/>
    <property type="chains" value="d=18-124"/>
</dbReference>
<dbReference type="PDB" id="7ZJW">
    <property type="method" value="EM"/>
    <property type="resolution" value="2.80 A"/>
    <property type="chains" value="Lg=1-125"/>
</dbReference>
<dbReference type="PDB" id="7ZJX">
    <property type="method" value="EM"/>
    <property type="resolution" value="3.10 A"/>
    <property type="chains" value="Lg=1-125"/>
</dbReference>
<dbReference type="PDB" id="8B5L">
    <property type="method" value="EM"/>
    <property type="resolution" value="2.86 A"/>
    <property type="chains" value="d=18-124"/>
</dbReference>
<dbReference type="PDB" id="8B6C">
    <property type="method" value="EM"/>
    <property type="resolution" value="2.79 A"/>
    <property type="chains" value="d=18-124"/>
</dbReference>
<dbReference type="PDB" id="8BHF">
    <property type="method" value="EM"/>
    <property type="resolution" value="3.10 A"/>
    <property type="chains" value="Q1=18-124"/>
</dbReference>
<dbReference type="PDB" id="8BPO">
    <property type="method" value="EM"/>
    <property type="resolution" value="2.80 A"/>
    <property type="chains" value="c2=1-125"/>
</dbReference>
<dbReference type="PDB" id="8BTK">
    <property type="method" value="EM"/>
    <property type="resolution" value="3.50 A"/>
    <property type="chains" value="Bd=1-125"/>
</dbReference>
<dbReference type="PDB" id="8P2K">
    <property type="method" value="EM"/>
    <property type="resolution" value="2.90 A"/>
    <property type="chains" value="Bd=1-125"/>
</dbReference>
<dbReference type="PDB" id="8RJB">
    <property type="method" value="EM"/>
    <property type="resolution" value="2.69 A"/>
    <property type="chains" value="d=1-125"/>
</dbReference>
<dbReference type="PDB" id="8RJC">
    <property type="method" value="EM"/>
    <property type="resolution" value="2.90 A"/>
    <property type="chains" value="d=1-125"/>
</dbReference>
<dbReference type="PDB" id="8RJD">
    <property type="method" value="EM"/>
    <property type="resolution" value="2.79 A"/>
    <property type="chains" value="d=1-125"/>
</dbReference>
<dbReference type="PDB" id="8SCB">
    <property type="method" value="EM"/>
    <property type="resolution" value="2.50 A"/>
    <property type="chains" value="d=1-125"/>
</dbReference>
<dbReference type="PDB" id="8VFT">
    <property type="method" value="EM"/>
    <property type="resolution" value="3.30 A"/>
    <property type="chains" value="d=1-125"/>
</dbReference>
<dbReference type="PDB" id="9BDL">
    <property type="method" value="EM"/>
    <property type="resolution" value="2.80 A"/>
    <property type="chains" value="AL31=18-124"/>
</dbReference>
<dbReference type="PDB" id="9BDN">
    <property type="method" value="EM"/>
    <property type="resolution" value="3.10 A"/>
    <property type="chains" value="AL31=18-124"/>
</dbReference>
<dbReference type="PDB" id="9BDP">
    <property type="method" value="EM"/>
    <property type="resolution" value="3.70 A"/>
    <property type="chains" value="AL31=18-124"/>
</dbReference>
<dbReference type="PDB" id="9F1B">
    <property type="method" value="EM"/>
    <property type="resolution" value="3.01 A"/>
    <property type="chains" value="Bd=1-125"/>
</dbReference>
<dbReference type="PDB" id="9F1C">
    <property type="method" value="EM"/>
    <property type="resolution" value="3.78 A"/>
    <property type="chains" value="Bd=1-125"/>
</dbReference>
<dbReference type="PDB" id="9F1D">
    <property type="method" value="EM"/>
    <property type="resolution" value="3.26 A"/>
    <property type="chains" value="Bd=1-125"/>
</dbReference>
<dbReference type="PDBsum" id="3JAG"/>
<dbReference type="PDBsum" id="3JAH"/>
<dbReference type="PDBsum" id="3JAI"/>
<dbReference type="PDBsum" id="5LZS"/>
<dbReference type="PDBsum" id="5LZT"/>
<dbReference type="PDBsum" id="5LZU"/>
<dbReference type="PDBsum" id="5LZV"/>
<dbReference type="PDBsum" id="5LZW"/>
<dbReference type="PDBsum" id="5LZX"/>
<dbReference type="PDBsum" id="5LZY"/>
<dbReference type="PDBsum" id="5LZZ"/>
<dbReference type="PDBsum" id="6D90"/>
<dbReference type="PDBsum" id="6D9J"/>
<dbReference type="PDBsum" id="6FTG"/>
<dbReference type="PDBsum" id="6FTI"/>
<dbReference type="PDBsum" id="6FTJ"/>
<dbReference type="PDBsum" id="6GZ3"/>
<dbReference type="PDBsum" id="6HCF"/>
<dbReference type="PDBsum" id="6HCJ"/>
<dbReference type="PDBsum" id="6HCM"/>
<dbReference type="PDBsum" id="6HCQ"/>
<dbReference type="PDBsum" id="6MTB"/>
<dbReference type="PDBsum" id="6MTC"/>
<dbReference type="PDBsum" id="6MTD"/>
<dbReference type="PDBsum" id="6MTE"/>
<dbReference type="PDBsum" id="6P5I"/>
<dbReference type="PDBsum" id="6P5J"/>
<dbReference type="PDBsum" id="6P5K"/>
<dbReference type="PDBsum" id="6P5N"/>
<dbReference type="PDBsum" id="6R5Q"/>
<dbReference type="PDBsum" id="6R6G"/>
<dbReference type="PDBsum" id="6R6P"/>
<dbReference type="PDBsum" id="6R7Q"/>
<dbReference type="PDBsum" id="6SGC"/>
<dbReference type="PDBsum" id="6T59"/>
<dbReference type="PDBsum" id="6ZVK"/>
<dbReference type="PDBsum" id="7A01"/>
<dbReference type="PDBsum" id="7MDZ"/>
<dbReference type="PDBsum" id="7NFX"/>
<dbReference type="PDBsum" id="7NWG"/>
<dbReference type="PDBsum" id="7NWI"/>
<dbReference type="PDBsum" id="7O7Y"/>
<dbReference type="PDBsum" id="7O7Z"/>
<dbReference type="PDBsum" id="7O80"/>
<dbReference type="PDBsum" id="7O81"/>
<dbReference type="PDBsum" id="7OBR"/>
<dbReference type="PDBsum" id="7OYD"/>
<dbReference type="PDBsum" id="7QWQ"/>
<dbReference type="PDBsum" id="7QWR"/>
<dbReference type="PDBsum" id="7QWS"/>
<dbReference type="PDBsum" id="7TM3"/>
<dbReference type="PDBsum" id="7TOQ"/>
<dbReference type="PDBsum" id="7TOR"/>
<dbReference type="PDBsum" id="7TUT"/>
<dbReference type="PDBsum" id="7UCJ"/>
<dbReference type="PDBsum" id="7UCK"/>
<dbReference type="PDBsum" id="7ZJW"/>
<dbReference type="PDBsum" id="7ZJX"/>
<dbReference type="PDBsum" id="8B5L"/>
<dbReference type="PDBsum" id="8B6C"/>
<dbReference type="PDBsum" id="8BHF"/>
<dbReference type="PDBsum" id="8BPO"/>
<dbReference type="PDBsum" id="8BTK"/>
<dbReference type="PDBsum" id="8P2K"/>
<dbReference type="PDBsum" id="8RJB"/>
<dbReference type="PDBsum" id="8RJC"/>
<dbReference type="PDBsum" id="8RJD"/>
<dbReference type="PDBsum" id="8SCB"/>
<dbReference type="PDBsum" id="8VFT"/>
<dbReference type="PDBsum" id="9BDL"/>
<dbReference type="PDBsum" id="9BDN"/>
<dbReference type="PDBsum" id="9BDP"/>
<dbReference type="PDBsum" id="9F1B"/>
<dbReference type="PDBsum" id="9F1C"/>
<dbReference type="PDBsum" id="9F1D"/>
<dbReference type="EMDB" id="EMD-0098"/>
<dbReference type="EMDB" id="EMD-0099"/>
<dbReference type="EMDB" id="EMD-0100"/>
<dbReference type="EMDB" id="EMD-0192"/>
<dbReference type="EMDB" id="EMD-0194"/>
<dbReference type="EMDB" id="EMD-0195"/>
<dbReference type="EMDB" id="EMD-0197"/>
<dbReference type="EMDB" id="EMD-10181"/>
<dbReference type="EMDB" id="EMD-10380"/>
<dbReference type="EMDB" id="EMD-11459"/>
<dbReference type="EMDB" id="EMD-11590"/>
<dbReference type="EMDB" id="EMD-12303"/>
<dbReference type="EMDB" id="EMD-12631"/>
<dbReference type="EMDB" id="EMD-12632"/>
<dbReference type="EMDB" id="EMD-12633"/>
<dbReference type="EMDB" id="EMD-12756"/>
<dbReference type="EMDB" id="EMD-12757"/>
<dbReference type="EMDB" id="EMD-12758"/>
<dbReference type="EMDB" id="EMD-12759"/>
<dbReference type="EMDB" id="EMD-12801"/>
<dbReference type="EMDB" id="EMD-13114"/>
<dbReference type="EMDB" id="EMD-14191"/>
<dbReference type="EMDB" id="EMD-14192"/>
<dbReference type="EMDB" id="EMD-14193"/>
<dbReference type="EMDB" id="EMD-14751"/>
<dbReference type="EMDB" id="EMD-14752"/>
<dbReference type="EMDB" id="EMD-15860"/>
<dbReference type="EMDB" id="EMD-15863"/>
<dbReference type="EMDB" id="EMD-16052"/>
<dbReference type="EMDB" id="EMD-16155"/>
<dbReference type="EMDB" id="EMD-16232"/>
<dbReference type="EMDB" id="EMD-17367"/>
<dbReference type="EMDB" id="EMD-19195"/>
<dbReference type="EMDB" id="EMD-19197"/>
<dbReference type="EMDB" id="EMD-19198"/>
<dbReference type="EMDB" id="EMD-20255"/>
<dbReference type="EMDB" id="EMD-20256"/>
<dbReference type="EMDB" id="EMD-20257"/>
<dbReference type="EMDB" id="EMD-20258"/>
<dbReference type="EMDB" id="EMD-23785"/>
<dbReference type="EMDB" id="EMD-25994"/>
<dbReference type="EMDB" id="EMD-26035"/>
<dbReference type="EMDB" id="EMD-26036"/>
<dbReference type="EMDB" id="EMD-26133"/>
<dbReference type="EMDB" id="EMD-26444"/>
<dbReference type="EMDB" id="EMD-26445"/>
<dbReference type="EMDB" id="EMD-40344"/>
<dbReference type="EMDB" id="EMD-4130"/>
<dbReference type="EMDB" id="EMD-4131"/>
<dbReference type="EMDB" id="EMD-4132"/>
<dbReference type="EMDB" id="EMD-4133"/>
<dbReference type="EMDB" id="EMD-4134"/>
<dbReference type="EMDB" id="EMD-4135"/>
<dbReference type="EMDB" id="EMD-4136"/>
<dbReference type="EMDB" id="EMD-4137"/>
<dbReference type="EMDB" id="EMD-4300"/>
<dbReference type="EMDB" id="EMD-4315"/>
<dbReference type="EMDB" id="EMD-4316"/>
<dbReference type="EMDB" id="EMD-4317"/>
<dbReference type="EMDB" id="EMD-43189"/>
<dbReference type="EMDB" id="EMD-44461"/>
<dbReference type="EMDB" id="EMD-44463"/>
<dbReference type="EMDB" id="EMD-44464"/>
<dbReference type="EMDB" id="EMD-4729"/>
<dbReference type="EMDB" id="EMD-4735"/>
<dbReference type="EMDB" id="EMD-4737"/>
<dbReference type="EMDB" id="EMD-4745"/>
<dbReference type="EMDB" id="EMD-50124"/>
<dbReference type="EMDB" id="EMD-50125"/>
<dbReference type="EMDB" id="EMD-50126"/>
<dbReference type="EMDB" id="EMD-7834"/>
<dbReference type="EMDB" id="EMD-7836"/>
<dbReference type="EMDB" id="EMD-9237"/>
<dbReference type="EMDB" id="EMD-9239"/>
<dbReference type="EMDB" id="EMD-9240"/>
<dbReference type="EMDB" id="EMD-9242"/>
<dbReference type="SMR" id="G1SHG0"/>
<dbReference type="IntAct" id="G1SHG0">
    <property type="interactions" value="1"/>
</dbReference>
<dbReference type="PaxDb" id="9986-ENSOCUP00000002065"/>
<dbReference type="Ensembl" id="ENSOCUT00000002390.3">
    <property type="protein sequence ID" value="ENSOCUP00000002065.2"/>
    <property type="gene ID" value="ENSOCUG00000002392.3"/>
</dbReference>
<dbReference type="GeneID" id="100340643"/>
<dbReference type="KEGG" id="ocu:100340643"/>
<dbReference type="CTD" id="6160"/>
<dbReference type="eggNOG" id="KOG0893">
    <property type="taxonomic scope" value="Eukaryota"/>
</dbReference>
<dbReference type="GeneTree" id="ENSGT00950000183030"/>
<dbReference type="HOGENOM" id="CLU_112570_1_1_1"/>
<dbReference type="OMA" id="EVWKQGI"/>
<dbReference type="OrthoDB" id="9612962at2759"/>
<dbReference type="TreeFam" id="TF314858"/>
<dbReference type="Proteomes" id="UP000001811">
    <property type="component" value="Chromosome 2"/>
</dbReference>
<dbReference type="Bgee" id="ENSOCUG00000002392">
    <property type="expression patterns" value="Expressed in upper lobe of left lung and 15 other cell types or tissues"/>
</dbReference>
<dbReference type="GO" id="GO:0022625">
    <property type="term" value="C:cytosolic large ribosomal subunit"/>
    <property type="evidence" value="ECO:0007669"/>
    <property type="project" value="TreeGrafter"/>
</dbReference>
<dbReference type="GO" id="GO:0003735">
    <property type="term" value="F:structural constituent of ribosome"/>
    <property type="evidence" value="ECO:0007669"/>
    <property type="project" value="InterPro"/>
</dbReference>
<dbReference type="GO" id="GO:0002181">
    <property type="term" value="P:cytoplasmic translation"/>
    <property type="evidence" value="ECO:0007669"/>
    <property type="project" value="TreeGrafter"/>
</dbReference>
<dbReference type="CDD" id="cd00463">
    <property type="entry name" value="Ribosomal_L31e"/>
    <property type="match status" value="1"/>
</dbReference>
<dbReference type="FunFam" id="3.10.440.10:FF:000001">
    <property type="entry name" value="60S ribosomal protein L31"/>
    <property type="match status" value="1"/>
</dbReference>
<dbReference type="Gene3D" id="3.10.440.10">
    <property type="match status" value="1"/>
</dbReference>
<dbReference type="InterPro" id="IPR000054">
    <property type="entry name" value="Ribosomal_eL31"/>
</dbReference>
<dbReference type="InterPro" id="IPR020052">
    <property type="entry name" value="Ribosomal_eL31_CS"/>
</dbReference>
<dbReference type="InterPro" id="IPR023621">
    <property type="entry name" value="Ribosomal_eL31_dom_sf"/>
</dbReference>
<dbReference type="PANTHER" id="PTHR10956">
    <property type="entry name" value="60S RIBOSOMAL PROTEIN L31"/>
    <property type="match status" value="1"/>
</dbReference>
<dbReference type="PANTHER" id="PTHR10956:SF0">
    <property type="entry name" value="60S RIBOSOMAL PROTEIN L31"/>
    <property type="match status" value="1"/>
</dbReference>
<dbReference type="Pfam" id="PF01198">
    <property type="entry name" value="Ribosomal_L31e"/>
    <property type="match status" value="1"/>
</dbReference>
<dbReference type="SMART" id="SM01380">
    <property type="entry name" value="Ribosomal_L31e"/>
    <property type="match status" value="1"/>
</dbReference>
<dbReference type="SUPFAM" id="SSF54575">
    <property type="entry name" value="Ribosomal protein L31e"/>
    <property type="match status" value="1"/>
</dbReference>
<dbReference type="PROSITE" id="PS01144">
    <property type="entry name" value="RIBOSOMAL_L31E"/>
    <property type="match status" value="1"/>
</dbReference>
<gene>
    <name type="primary">RPL31</name>
</gene>